<accession>Q4KTE2</accession>
<proteinExistence type="evidence at transcript level"/>
<feature type="initiator methionine" description="Removed" evidence="1">
    <location>
        <position position="1"/>
    </location>
</feature>
<feature type="chain" id="PRO_0000371595" description="Small ribosomal subunit protein uS2">
    <location>
        <begin position="2"/>
        <end position="325"/>
    </location>
</feature>
<feature type="region of interest" description="Disordered" evidence="2">
    <location>
        <begin position="212"/>
        <end position="325"/>
    </location>
</feature>
<feature type="compositionally biased region" description="Basic and acidic residues" evidence="2">
    <location>
        <begin position="212"/>
        <end position="226"/>
    </location>
</feature>
<feature type="compositionally biased region" description="Low complexity" evidence="2">
    <location>
        <begin position="234"/>
        <end position="247"/>
    </location>
</feature>
<feature type="compositionally biased region" description="Low complexity" evidence="2">
    <location>
        <begin position="261"/>
        <end position="289"/>
    </location>
</feature>
<feature type="compositionally biased region" description="Polar residues" evidence="2">
    <location>
        <begin position="290"/>
        <end position="300"/>
    </location>
</feature>
<reference key="1">
    <citation type="journal article" date="2006" name="Gene">
        <title>The complete set of ribosomal proteins from the marine sponge Suberites domuncula.</title>
        <authorList>
            <person name="Perina D."/>
            <person name="Cetkovic H."/>
            <person name="Harcet M."/>
            <person name="Premzl M."/>
            <person name="Lukic-Bilela L."/>
            <person name="Mueller W.E.G."/>
            <person name="Gamulin V."/>
        </authorList>
    </citation>
    <scope>NUCLEOTIDE SEQUENCE [MRNA]</scope>
</reference>
<evidence type="ECO:0000255" key="1">
    <source>
        <dbReference type="HAMAP-Rule" id="MF_03015"/>
    </source>
</evidence>
<evidence type="ECO:0000256" key="2">
    <source>
        <dbReference type="SAM" id="MobiDB-lite"/>
    </source>
</evidence>
<evidence type="ECO:0000305" key="3"/>
<organism>
    <name type="scientific">Suberites domuncula</name>
    <name type="common">Sponge</name>
    <dbReference type="NCBI Taxonomy" id="55567"/>
    <lineage>
        <taxon>Eukaryota</taxon>
        <taxon>Metazoa</taxon>
        <taxon>Porifera</taxon>
        <taxon>Demospongiae</taxon>
        <taxon>Heteroscleromorpha</taxon>
        <taxon>Suberitida</taxon>
        <taxon>Suberitidae</taxon>
        <taxon>Suberites</taxon>
    </lineage>
</organism>
<comment type="function">
    <text evidence="1">Required for the assembly and/or stability of the 40S ribosomal subunit. Required for the processing of the 20S rRNA-precursor to mature 18S rRNA in a late step of the maturation of 40S ribosomal subunits.</text>
</comment>
<comment type="subunit">
    <text evidence="1">Component of the small ribosomal subunit. Mature ribosomes consist of a small (40S) and a large (60S) subunit. The 40S subunit contains about 33 different proteins and 1 molecule of RNA (18S). The 60S subunit contains about 49 different proteins and 3 molecules of RNA (28S, 5.8S and 5S). Interacts with ribosomal protein S21.</text>
</comment>
<comment type="subcellular location">
    <subcellularLocation>
        <location evidence="1">Cytoplasm</location>
    </subcellularLocation>
</comment>
<comment type="similarity">
    <text evidence="1">Belongs to the universal ribosomal protein uS2 family.</text>
</comment>
<name>RSSA_SUBDO</name>
<dbReference type="EMBL" id="AY857457">
    <property type="protein sequence ID" value="AAX48876.1"/>
    <property type="molecule type" value="mRNA"/>
</dbReference>
<dbReference type="SMR" id="Q4KTE2"/>
<dbReference type="GO" id="GO:0022627">
    <property type="term" value="C:cytosolic small ribosomal subunit"/>
    <property type="evidence" value="ECO:0007669"/>
    <property type="project" value="UniProtKB-UniRule"/>
</dbReference>
<dbReference type="GO" id="GO:0003735">
    <property type="term" value="F:structural constituent of ribosome"/>
    <property type="evidence" value="ECO:0007669"/>
    <property type="project" value="UniProtKB-UniRule"/>
</dbReference>
<dbReference type="GO" id="GO:0000028">
    <property type="term" value="P:ribosomal small subunit assembly"/>
    <property type="evidence" value="ECO:0007669"/>
    <property type="project" value="UniProtKB-UniRule"/>
</dbReference>
<dbReference type="GO" id="GO:0006412">
    <property type="term" value="P:translation"/>
    <property type="evidence" value="ECO:0007669"/>
    <property type="project" value="UniProtKB-UniRule"/>
</dbReference>
<dbReference type="CDD" id="cd01425">
    <property type="entry name" value="RPS2"/>
    <property type="match status" value="1"/>
</dbReference>
<dbReference type="FunFam" id="3.40.50.10490:FF:000012">
    <property type="entry name" value="40S ribosomal protein SA"/>
    <property type="match status" value="1"/>
</dbReference>
<dbReference type="Gene3D" id="3.40.50.10490">
    <property type="entry name" value="Glucose-6-phosphate isomerase like protein, domain 1"/>
    <property type="match status" value="1"/>
</dbReference>
<dbReference type="HAMAP" id="MF_03015">
    <property type="entry name" value="Ribosomal_S2_euk"/>
    <property type="match status" value="1"/>
</dbReference>
<dbReference type="InterPro" id="IPR001865">
    <property type="entry name" value="Ribosomal_uS2"/>
</dbReference>
<dbReference type="InterPro" id="IPR032281">
    <property type="entry name" value="Ribosomal_uS2_C"/>
</dbReference>
<dbReference type="InterPro" id="IPR018130">
    <property type="entry name" value="Ribosomal_uS2_CS"/>
</dbReference>
<dbReference type="InterPro" id="IPR027498">
    <property type="entry name" value="Ribosomal_uS2_euk"/>
</dbReference>
<dbReference type="InterPro" id="IPR005707">
    <property type="entry name" value="Ribosomal_uS2_euk/arc"/>
</dbReference>
<dbReference type="InterPro" id="IPR023591">
    <property type="entry name" value="Ribosomal_uS2_flav_dom_sf"/>
</dbReference>
<dbReference type="NCBIfam" id="TIGR01012">
    <property type="entry name" value="uS2_euk_arch"/>
    <property type="match status" value="1"/>
</dbReference>
<dbReference type="PANTHER" id="PTHR11489">
    <property type="entry name" value="40S RIBOSOMAL PROTEIN SA"/>
    <property type="match status" value="1"/>
</dbReference>
<dbReference type="Pfam" id="PF16122">
    <property type="entry name" value="40S_SA_C"/>
    <property type="match status" value="1"/>
</dbReference>
<dbReference type="Pfam" id="PF00318">
    <property type="entry name" value="Ribosomal_S2"/>
    <property type="match status" value="1"/>
</dbReference>
<dbReference type="PRINTS" id="PR00395">
    <property type="entry name" value="RIBOSOMALS2"/>
</dbReference>
<dbReference type="SUPFAM" id="SSF52313">
    <property type="entry name" value="Ribosomal protein S2"/>
    <property type="match status" value="1"/>
</dbReference>
<dbReference type="PROSITE" id="PS00962">
    <property type="entry name" value="RIBOSOMAL_S2_1"/>
    <property type="match status" value="1"/>
</dbReference>
<dbReference type="PROSITE" id="PS00963">
    <property type="entry name" value="RIBOSOMAL_S2_2"/>
    <property type="match status" value="1"/>
</dbReference>
<sequence>MSGGLEVLSMKEDDVTKLLAAGTHLGDSNVDIQMAQYVFKTKGDGVPIINVRKTWEKLLLAARVIAAIENPADVCVLANKPFGQRAILKFAHYTGAFPIAGRFTPGTFTNQIQKAFREPRLLIVSDARSDHQPITEAAYVNIPVIAFCNTNSPLRYIDVAIPCNNMGKNSLGLMWWLLCREVLRLRGTISRELPWEVMPDLFFYRDPEEVEKEEQAKAEAERERLATDQWQTNQPAAPQQDPDQWADTMGVPSGGDWGDEPVTTAPVPTGGAPPVASTTATPATNTGSGFNQDDWSVPTTKTKDWGADDGGEWGNTEPKASTGNW</sequence>
<protein>
    <recommendedName>
        <fullName evidence="1">Small ribosomal subunit protein uS2</fullName>
    </recommendedName>
    <alternativeName>
        <fullName evidence="3">40S ribosomal protein SA</fullName>
    </alternativeName>
</protein>
<keyword id="KW-0963">Cytoplasm</keyword>
<keyword id="KW-0687">Ribonucleoprotein</keyword>
<keyword id="KW-0689">Ribosomal protein</keyword>